<reference key="1">
    <citation type="journal article" date="2008" name="J. Bacteriol.">
        <title>The pangenome structure of Escherichia coli: comparative genomic analysis of E. coli commensal and pathogenic isolates.</title>
        <authorList>
            <person name="Rasko D.A."/>
            <person name="Rosovitz M.J."/>
            <person name="Myers G.S.A."/>
            <person name="Mongodin E.F."/>
            <person name="Fricke W.F."/>
            <person name="Gajer P."/>
            <person name="Crabtree J."/>
            <person name="Sebaihia M."/>
            <person name="Thomson N.R."/>
            <person name="Chaudhuri R."/>
            <person name="Henderson I.R."/>
            <person name="Sperandio V."/>
            <person name="Ravel J."/>
        </authorList>
    </citation>
    <scope>NUCLEOTIDE SEQUENCE [LARGE SCALE GENOMIC DNA]</scope>
    <source>
        <strain>HS</strain>
    </source>
</reference>
<gene>
    <name evidence="1" type="primary">gpmB</name>
    <name type="ordered locus">EcHS_A4631</name>
</gene>
<evidence type="ECO:0000255" key="1">
    <source>
        <dbReference type="HAMAP-Rule" id="MF_01040"/>
    </source>
</evidence>
<protein>
    <recommendedName>
        <fullName evidence="1">Probable phosphoglycerate mutase GpmB</fullName>
        <ecNumber evidence="1">5.4.2.-</ecNumber>
    </recommendedName>
    <alternativeName>
        <fullName evidence="1">PGAM</fullName>
    </alternativeName>
    <alternativeName>
        <fullName evidence="1">Phosphoglyceromutase</fullName>
    </alternativeName>
</protein>
<feature type="chain" id="PRO_1000064121" description="Probable phosphoglycerate mutase GpmB">
    <location>
        <begin position="1"/>
        <end position="215"/>
    </location>
</feature>
<feature type="active site" description="Tele-phosphohistidine intermediate" evidence="1">
    <location>
        <position position="9"/>
    </location>
</feature>
<feature type="active site" description="Proton donor/acceptor" evidence="1">
    <location>
        <position position="82"/>
    </location>
</feature>
<feature type="binding site" evidence="1">
    <location>
        <begin position="8"/>
        <end position="15"/>
    </location>
    <ligand>
        <name>substrate</name>
    </ligand>
</feature>
<feature type="binding site" evidence="1">
    <location>
        <begin position="21"/>
        <end position="22"/>
    </location>
    <ligand>
        <name>substrate</name>
    </ligand>
</feature>
<feature type="binding site" evidence="1">
    <location>
        <position position="58"/>
    </location>
    <ligand>
        <name>substrate</name>
    </ligand>
</feature>
<feature type="binding site" evidence="1">
    <location>
        <position position="60"/>
    </location>
    <ligand>
        <name>substrate</name>
    </ligand>
</feature>
<feature type="binding site" evidence="1">
    <location>
        <begin position="82"/>
        <end position="85"/>
    </location>
    <ligand>
        <name>substrate</name>
    </ligand>
</feature>
<feature type="binding site" evidence="1">
    <location>
        <begin position="104"/>
        <end position="105"/>
    </location>
    <ligand>
        <name>substrate</name>
    </ligand>
</feature>
<feature type="binding site" evidence="1">
    <location>
        <begin position="151"/>
        <end position="152"/>
    </location>
    <ligand>
        <name>substrate</name>
    </ligand>
</feature>
<feature type="site" description="Transition state stabilizer" evidence="1">
    <location>
        <position position="150"/>
    </location>
</feature>
<proteinExistence type="inferred from homology"/>
<keyword id="KW-0324">Glycolysis</keyword>
<keyword id="KW-0413">Isomerase</keyword>
<dbReference type="EC" id="5.4.2.-" evidence="1"/>
<dbReference type="EMBL" id="CP000802">
    <property type="protein sequence ID" value="ABV08778.1"/>
    <property type="molecule type" value="Genomic_DNA"/>
</dbReference>
<dbReference type="RefSeq" id="WP_000942344.1">
    <property type="nucleotide sequence ID" value="NC_009800.1"/>
</dbReference>
<dbReference type="SMR" id="A8A8C4"/>
<dbReference type="GeneID" id="93777450"/>
<dbReference type="KEGG" id="ecx:EcHS_A4631"/>
<dbReference type="HOGENOM" id="CLU_033323_9_5_6"/>
<dbReference type="UniPathway" id="UPA00109">
    <property type="reaction ID" value="UER00186"/>
</dbReference>
<dbReference type="GO" id="GO:0005737">
    <property type="term" value="C:cytoplasm"/>
    <property type="evidence" value="ECO:0007669"/>
    <property type="project" value="TreeGrafter"/>
</dbReference>
<dbReference type="GO" id="GO:0016791">
    <property type="term" value="F:phosphatase activity"/>
    <property type="evidence" value="ECO:0007669"/>
    <property type="project" value="TreeGrafter"/>
</dbReference>
<dbReference type="GO" id="GO:0004619">
    <property type="term" value="F:phosphoglycerate mutase activity"/>
    <property type="evidence" value="ECO:0007669"/>
    <property type="project" value="UniProtKB-UniRule"/>
</dbReference>
<dbReference type="GO" id="GO:0006096">
    <property type="term" value="P:glycolytic process"/>
    <property type="evidence" value="ECO:0007669"/>
    <property type="project" value="UniProtKB-UniRule"/>
</dbReference>
<dbReference type="CDD" id="cd07067">
    <property type="entry name" value="HP_PGM_like"/>
    <property type="match status" value="1"/>
</dbReference>
<dbReference type="Gene3D" id="3.40.50.1240">
    <property type="entry name" value="Phosphoglycerate mutase-like"/>
    <property type="match status" value="1"/>
</dbReference>
<dbReference type="HAMAP" id="MF_01040">
    <property type="entry name" value="PGAM_GpmB"/>
    <property type="match status" value="1"/>
</dbReference>
<dbReference type="InterPro" id="IPR013078">
    <property type="entry name" value="His_Pase_superF_clade-1"/>
</dbReference>
<dbReference type="InterPro" id="IPR029033">
    <property type="entry name" value="His_PPase_superfam"/>
</dbReference>
<dbReference type="InterPro" id="IPR001345">
    <property type="entry name" value="PG/BPGM_mutase_AS"/>
</dbReference>
<dbReference type="InterPro" id="IPR050275">
    <property type="entry name" value="PGM_Phosphatase"/>
</dbReference>
<dbReference type="InterPro" id="IPR023086">
    <property type="entry name" value="Phosphoglycerate_mutase_GpmB"/>
</dbReference>
<dbReference type="NCBIfam" id="NF002901">
    <property type="entry name" value="PRK03482.1"/>
    <property type="match status" value="1"/>
</dbReference>
<dbReference type="PANTHER" id="PTHR48100">
    <property type="entry name" value="BROAD-SPECIFICITY PHOSPHATASE YOR283W-RELATED"/>
    <property type="match status" value="1"/>
</dbReference>
<dbReference type="PANTHER" id="PTHR48100:SF1">
    <property type="entry name" value="HISTIDINE PHOSPHATASE FAMILY PROTEIN-RELATED"/>
    <property type="match status" value="1"/>
</dbReference>
<dbReference type="Pfam" id="PF00300">
    <property type="entry name" value="His_Phos_1"/>
    <property type="match status" value="1"/>
</dbReference>
<dbReference type="SMART" id="SM00855">
    <property type="entry name" value="PGAM"/>
    <property type="match status" value="1"/>
</dbReference>
<dbReference type="SUPFAM" id="SSF53254">
    <property type="entry name" value="Phosphoglycerate mutase-like"/>
    <property type="match status" value="1"/>
</dbReference>
<dbReference type="PROSITE" id="PS00175">
    <property type="entry name" value="PG_MUTASE"/>
    <property type="match status" value="1"/>
</dbReference>
<sequence>MLQVYLVRHGETQWNAERRIQGQSDSPLTAKGEQQAMQVATRAKELGITHIISSDLGRTRRTAEIIAQACGCDIIFDSRLRELNMGVLEKRHIDSLTEEEENWRRQLVNGTVDGRIPEGESMQELSDRVNAALESCRDLPQGSRPLLVSHGIALGCLVSTILGLPAWAERRLRLRNCSISRVDYQESLWLASGWVVETAGDISHLDAPALDELQR</sequence>
<accession>A8A8C4</accession>
<organism>
    <name type="scientific">Escherichia coli O9:H4 (strain HS)</name>
    <dbReference type="NCBI Taxonomy" id="331112"/>
    <lineage>
        <taxon>Bacteria</taxon>
        <taxon>Pseudomonadati</taxon>
        <taxon>Pseudomonadota</taxon>
        <taxon>Gammaproteobacteria</taxon>
        <taxon>Enterobacterales</taxon>
        <taxon>Enterobacteriaceae</taxon>
        <taxon>Escherichia</taxon>
    </lineage>
</organism>
<comment type="catalytic activity">
    <reaction evidence="1">
        <text>(2R)-2-phosphoglycerate = (2R)-3-phosphoglycerate</text>
        <dbReference type="Rhea" id="RHEA:15901"/>
        <dbReference type="ChEBI" id="CHEBI:58272"/>
        <dbReference type="ChEBI" id="CHEBI:58289"/>
    </reaction>
</comment>
<comment type="pathway">
    <text evidence="1">Carbohydrate degradation; glycolysis; pyruvate from D-glyceraldehyde 3-phosphate: step 3/5.</text>
</comment>
<comment type="similarity">
    <text evidence="1">Belongs to the phosphoglycerate mutase family. GpmB subfamily.</text>
</comment>
<name>GPMB_ECOHS</name>